<protein>
    <recommendedName>
        <fullName>Microfibrillar-associated protein 2</fullName>
        <shortName>MFAP-2</shortName>
    </recommendedName>
    <alternativeName>
        <fullName>Microfibril-associated glycoprotein 1</fullName>
        <shortName>MAGP</shortName>
        <shortName>MAGP-1</shortName>
    </alternativeName>
</protein>
<evidence type="ECO:0000250" key="1">
    <source>
        <dbReference type="UniProtKB" id="P27424"/>
    </source>
</evidence>
<evidence type="ECO:0000255" key="2"/>
<evidence type="ECO:0000255" key="3">
    <source>
        <dbReference type="PROSITE-ProRule" id="PRU01005"/>
    </source>
</evidence>
<evidence type="ECO:0000256" key="4">
    <source>
        <dbReference type="SAM" id="MobiDB-lite"/>
    </source>
</evidence>
<evidence type="ECO:0000303" key="5">
    <source ref="3"/>
</evidence>
<evidence type="ECO:0000303" key="6">
    <source ref="7"/>
</evidence>
<evidence type="ECO:0000305" key="7"/>
<dbReference type="EMBL" id="U19718">
    <property type="protein sequence ID" value="AAA79920.1"/>
    <property type="molecule type" value="mRNA"/>
</dbReference>
<dbReference type="EMBL" id="CR407678">
    <property type="protein sequence ID" value="CAG28606.1"/>
    <property type="molecule type" value="mRNA"/>
</dbReference>
<dbReference type="EMBL" id="AK222751">
    <property type="protein sequence ID" value="BAD96471.1"/>
    <property type="molecule type" value="mRNA"/>
</dbReference>
<dbReference type="EMBL" id="AL049569">
    <property type="status" value="NOT_ANNOTATED_CDS"/>
    <property type="molecule type" value="Genomic_DNA"/>
</dbReference>
<dbReference type="EMBL" id="CH471134">
    <property type="protein sequence ID" value="EAW94821.1"/>
    <property type="molecule type" value="Genomic_DNA"/>
</dbReference>
<dbReference type="EMBL" id="BC015039">
    <property type="protein sequence ID" value="AAH15039.1"/>
    <property type="molecule type" value="mRNA"/>
</dbReference>
<dbReference type="EMBL" id="H27217">
    <property type="status" value="NOT_ANNOTATED_CDS"/>
    <property type="molecule type" value="mRNA"/>
</dbReference>
<dbReference type="CCDS" id="CCDS174.1">
    <molecule id="P55001-1"/>
</dbReference>
<dbReference type="CCDS" id="CCDS44071.1">
    <molecule id="P55001-2"/>
</dbReference>
<dbReference type="PIR" id="I38923">
    <property type="entry name" value="I38923"/>
</dbReference>
<dbReference type="RefSeq" id="NP_001128719.1">
    <molecule id="P55001-2"/>
    <property type="nucleotide sequence ID" value="NM_001135247.2"/>
</dbReference>
<dbReference type="RefSeq" id="NP_001128720.1">
    <molecule id="P55001-2"/>
    <property type="nucleotide sequence ID" value="NM_001135248.2"/>
</dbReference>
<dbReference type="RefSeq" id="NP_002394.1">
    <molecule id="P55001-1"/>
    <property type="nucleotide sequence ID" value="NM_002403.4"/>
</dbReference>
<dbReference type="RefSeq" id="NP_059453.1">
    <molecule id="P55001-1"/>
    <property type="nucleotide sequence ID" value="NM_017459.3"/>
</dbReference>
<dbReference type="RefSeq" id="XP_011539778.1">
    <property type="nucleotide sequence ID" value="XM_011541476.2"/>
</dbReference>
<dbReference type="RefSeq" id="XP_047276983.1">
    <molecule id="P55001-1"/>
    <property type="nucleotide sequence ID" value="XM_047421027.1"/>
</dbReference>
<dbReference type="RefSeq" id="XP_054188783.1">
    <molecule id="P55001-1"/>
    <property type="nucleotide sequence ID" value="XM_054332808.1"/>
</dbReference>
<dbReference type="RefSeq" id="XP_054192640.1">
    <molecule id="P55001-1"/>
    <property type="nucleotide sequence ID" value="XM_054336665.1"/>
</dbReference>
<dbReference type="BioGRID" id="110395">
    <property type="interactions" value="9"/>
</dbReference>
<dbReference type="FunCoup" id="P55001">
    <property type="interactions" value="82"/>
</dbReference>
<dbReference type="IntAct" id="P55001">
    <property type="interactions" value="1"/>
</dbReference>
<dbReference type="STRING" id="9606.ENSP00000364685"/>
<dbReference type="GlyCosmos" id="P55001">
    <property type="glycosylation" value="2 sites, 2 glycans"/>
</dbReference>
<dbReference type="GlyGen" id="P55001">
    <property type="glycosylation" value="3 sites, 2 O-linked glycans (2 sites)"/>
</dbReference>
<dbReference type="iPTMnet" id="P55001"/>
<dbReference type="PhosphoSitePlus" id="P55001"/>
<dbReference type="BioMuta" id="MFAP2"/>
<dbReference type="DMDM" id="1708914"/>
<dbReference type="jPOST" id="P55001"/>
<dbReference type="MassIVE" id="P55001"/>
<dbReference type="PaxDb" id="9606-ENSP00000364685"/>
<dbReference type="PeptideAtlas" id="P55001"/>
<dbReference type="ProteomicsDB" id="56750">
    <molecule id="P55001-1"/>
</dbReference>
<dbReference type="ProteomicsDB" id="56751">
    <molecule id="P55001-2"/>
</dbReference>
<dbReference type="ProteomicsDB" id="56752">
    <molecule id="P55001-3"/>
</dbReference>
<dbReference type="Pumba" id="P55001"/>
<dbReference type="Antibodypedia" id="1230">
    <property type="antibodies" value="173 antibodies from 22 providers"/>
</dbReference>
<dbReference type="DNASU" id="4237"/>
<dbReference type="Ensembl" id="ENST00000375534.7">
    <molecule id="P55001-2"/>
    <property type="protein sequence ID" value="ENSP00000364684.3"/>
    <property type="gene ID" value="ENSG00000117122.14"/>
</dbReference>
<dbReference type="Ensembl" id="ENST00000375535.4">
    <molecule id="P55001-1"/>
    <property type="protein sequence ID" value="ENSP00000364685.3"/>
    <property type="gene ID" value="ENSG00000117122.14"/>
</dbReference>
<dbReference type="GeneID" id="4237"/>
<dbReference type="KEGG" id="hsa:4237"/>
<dbReference type="MANE-Select" id="ENST00000375535.4">
    <property type="protein sequence ID" value="ENSP00000364685.3"/>
    <property type="RefSeq nucleotide sequence ID" value="NM_002403.4"/>
    <property type="RefSeq protein sequence ID" value="NP_002394.1"/>
</dbReference>
<dbReference type="UCSC" id="uc001azw.4">
    <molecule id="P55001-1"/>
    <property type="organism name" value="human"/>
</dbReference>
<dbReference type="AGR" id="HGNC:7033"/>
<dbReference type="CTD" id="4237"/>
<dbReference type="DisGeNET" id="4237"/>
<dbReference type="GeneCards" id="MFAP2"/>
<dbReference type="HGNC" id="HGNC:7033">
    <property type="gene designation" value="MFAP2"/>
</dbReference>
<dbReference type="HPA" id="ENSG00000117122">
    <property type="expression patterns" value="Low tissue specificity"/>
</dbReference>
<dbReference type="MIM" id="156790">
    <property type="type" value="gene"/>
</dbReference>
<dbReference type="neXtProt" id="NX_P55001"/>
<dbReference type="OpenTargets" id="ENSG00000117122"/>
<dbReference type="PharmGKB" id="PA30769"/>
<dbReference type="VEuPathDB" id="HostDB:ENSG00000117122"/>
<dbReference type="eggNOG" id="ENOG502RXC2">
    <property type="taxonomic scope" value="Eukaryota"/>
</dbReference>
<dbReference type="GeneTree" id="ENSGT00390000017736"/>
<dbReference type="HOGENOM" id="CLU_124750_0_0_1"/>
<dbReference type="InParanoid" id="P55001"/>
<dbReference type="OMA" id="CMRTVCA"/>
<dbReference type="OrthoDB" id="9947781at2759"/>
<dbReference type="PAN-GO" id="P55001">
    <property type="GO annotations" value="2 GO annotations based on evolutionary models"/>
</dbReference>
<dbReference type="PhylomeDB" id="P55001"/>
<dbReference type="TreeFam" id="TF333418"/>
<dbReference type="PathwayCommons" id="P55001"/>
<dbReference type="Reactome" id="R-HSA-1566948">
    <property type="pathway name" value="Elastic fibre formation"/>
</dbReference>
<dbReference type="Reactome" id="R-HSA-2129379">
    <property type="pathway name" value="Molecules associated with elastic fibres"/>
</dbReference>
<dbReference type="SignaLink" id="P55001"/>
<dbReference type="BioGRID-ORCS" id="4237">
    <property type="hits" value="9 hits in 1140 CRISPR screens"/>
</dbReference>
<dbReference type="GeneWiki" id="MFAP2"/>
<dbReference type="GenomeRNAi" id="4237"/>
<dbReference type="Pharos" id="P55001">
    <property type="development level" value="Tbio"/>
</dbReference>
<dbReference type="PRO" id="PR:P55001"/>
<dbReference type="Proteomes" id="UP000005640">
    <property type="component" value="Chromosome 1"/>
</dbReference>
<dbReference type="RNAct" id="P55001">
    <property type="molecule type" value="protein"/>
</dbReference>
<dbReference type="Bgee" id="ENSG00000117122">
    <property type="expression patterns" value="Expressed in stromal cell of endometrium and 97 other cell types or tissues"/>
</dbReference>
<dbReference type="ExpressionAtlas" id="P55001">
    <property type="expression patterns" value="baseline and differential"/>
</dbReference>
<dbReference type="GO" id="GO:0062023">
    <property type="term" value="C:collagen-containing extracellular matrix"/>
    <property type="evidence" value="ECO:0007005"/>
    <property type="project" value="BHF-UCL"/>
</dbReference>
<dbReference type="GO" id="GO:0005576">
    <property type="term" value="C:extracellular region"/>
    <property type="evidence" value="ECO:0000304"/>
    <property type="project" value="Reactome"/>
</dbReference>
<dbReference type="GO" id="GO:0001527">
    <property type="term" value="C:microfibril"/>
    <property type="evidence" value="ECO:0000314"/>
    <property type="project" value="CACAO"/>
</dbReference>
<dbReference type="GO" id="GO:0070051">
    <property type="term" value="F:fibrinogen binding"/>
    <property type="evidence" value="ECO:0007669"/>
    <property type="project" value="Ensembl"/>
</dbReference>
<dbReference type="GO" id="GO:0001968">
    <property type="term" value="F:fibronectin binding"/>
    <property type="evidence" value="ECO:0007669"/>
    <property type="project" value="Ensembl"/>
</dbReference>
<dbReference type="GO" id="GO:0048048">
    <property type="term" value="P:embryonic eye morphogenesis"/>
    <property type="evidence" value="ECO:0000270"/>
    <property type="project" value="UniProtKB"/>
</dbReference>
<dbReference type="GO" id="GO:0030220">
    <property type="term" value="P:platelet formation"/>
    <property type="evidence" value="ECO:0007669"/>
    <property type="project" value="Ensembl"/>
</dbReference>
<dbReference type="GO" id="GO:0120162">
    <property type="term" value="P:positive regulation of cold-induced thermogenesis"/>
    <property type="evidence" value="ECO:0000250"/>
    <property type="project" value="YuBioLab"/>
</dbReference>
<dbReference type="GO" id="GO:0048050">
    <property type="term" value="P:post-embryonic eye morphogenesis"/>
    <property type="evidence" value="ECO:0000270"/>
    <property type="project" value="UniProtKB"/>
</dbReference>
<dbReference type="InterPro" id="IPR008673">
    <property type="entry name" value="MAGP"/>
</dbReference>
<dbReference type="InterPro" id="IPR003582">
    <property type="entry name" value="ShKT_dom"/>
</dbReference>
<dbReference type="PANTHER" id="PTHR16485">
    <property type="entry name" value="MICROFIBRILLAR-ASSOCIATED PROTEIN 2"/>
    <property type="match status" value="1"/>
</dbReference>
<dbReference type="PANTHER" id="PTHR16485:SF3">
    <property type="entry name" value="MICROFIBRILLAR-ASSOCIATED PROTEIN 2"/>
    <property type="match status" value="1"/>
</dbReference>
<dbReference type="Pfam" id="PF05507">
    <property type="entry name" value="MAGP"/>
    <property type="match status" value="1"/>
</dbReference>
<dbReference type="PROSITE" id="PS51670">
    <property type="entry name" value="SHKT"/>
    <property type="match status" value="1"/>
</dbReference>
<name>MFAP2_HUMAN</name>
<sequence length="183" mass="20826">MRAAYLFLLFLPAGLLAQGQYDLDPLPPFPDHVQYTHYSDQIDNPDYYDYQEVTPRPSEEQFQFQSQQQVQQEVIPAPTPEPGNAELEPTEPGPLDCREEQYPCTRLYSIHRPCKQCLNEVCFYSLRRVYVINKEICVRTVCAHEELLRADLCRDKFSKCGVMASSGLCQSVAASCARSCGSC</sequence>
<organism>
    <name type="scientific">Homo sapiens</name>
    <name type="common">Human</name>
    <dbReference type="NCBI Taxonomy" id="9606"/>
    <lineage>
        <taxon>Eukaryota</taxon>
        <taxon>Metazoa</taxon>
        <taxon>Chordata</taxon>
        <taxon>Craniata</taxon>
        <taxon>Vertebrata</taxon>
        <taxon>Euteleostomi</taxon>
        <taxon>Mammalia</taxon>
        <taxon>Eutheria</taxon>
        <taxon>Euarchontoglires</taxon>
        <taxon>Primates</taxon>
        <taxon>Haplorrhini</taxon>
        <taxon>Catarrhini</taxon>
        <taxon>Hominidae</taxon>
        <taxon>Homo</taxon>
    </lineage>
</organism>
<feature type="signal peptide" description="Or 19" evidence="2">
    <location>
        <begin position="1"/>
        <end position="17"/>
    </location>
</feature>
<feature type="chain" id="PRO_0000018682" description="Microfibrillar-associated protein 2">
    <location>
        <begin position="18"/>
        <end position="183"/>
    </location>
</feature>
<feature type="domain" description="ShKT" evidence="3">
    <location>
        <begin position="153"/>
        <end position="183"/>
    </location>
</feature>
<feature type="region of interest" description="Disordered" evidence="4">
    <location>
        <begin position="58"/>
        <end position="94"/>
    </location>
</feature>
<feature type="compositionally biased region" description="Low complexity" evidence="4">
    <location>
        <begin position="60"/>
        <end position="74"/>
    </location>
</feature>
<feature type="modified residue" description="Pyrrolidone carboxylic acid" evidence="1">
    <location>
        <position position="18"/>
    </location>
</feature>
<feature type="modified residue" description="Sulfotyrosine" evidence="1">
    <location>
        <position position="47"/>
    </location>
</feature>
<feature type="modified residue" description="Sulfotyrosine" evidence="1">
    <location>
        <position position="48"/>
    </location>
</feature>
<feature type="modified residue" description="Sulfotyrosine" evidence="1">
    <location>
        <position position="50"/>
    </location>
</feature>
<feature type="disulfide bond" evidence="3">
    <location>
        <begin position="153"/>
        <end position="183"/>
    </location>
</feature>
<feature type="disulfide bond" evidence="3">
    <location>
        <begin position="160"/>
        <end position="176"/>
    </location>
</feature>
<feature type="disulfide bond" evidence="3">
    <location>
        <begin position="169"/>
        <end position="180"/>
    </location>
</feature>
<feature type="splice variant" id="VSP_042779" description="In isoform B." evidence="6">
    <location>
        <begin position="13"/>
        <end position="42"/>
    </location>
</feature>
<feature type="splice variant" id="VSP_042780" description="In isoform A'." evidence="5">
    <location>
        <position position="13"/>
    </location>
</feature>
<reference key="1">
    <citation type="journal article" date="1995" name="Genomics">
        <title>Characterization of the human gene for microfibril-associated glycoprotein (MFAP2), assignment to chromosome 1p36.1-p35, and linkage to D1S170.</title>
        <authorList>
            <person name="Faraco J."/>
            <person name="Bashir M.M."/>
            <person name="Rosenbloom J."/>
            <person name="Francke U."/>
        </authorList>
    </citation>
    <scope>NUCLEOTIDE SEQUENCE [MRNA] (ISOFORM A)</scope>
</reference>
<reference key="2">
    <citation type="submission" date="2004-05" db="EMBL/GenBank/DDBJ databases">
        <title>Cloning of human full open reading frames in Gateway(TM) system entry vector (pDONR201).</title>
        <authorList>
            <person name="Ebert L."/>
            <person name="Schick M."/>
            <person name="Neubert P."/>
            <person name="Schatten R."/>
            <person name="Henze S."/>
            <person name="Korn B."/>
        </authorList>
    </citation>
    <scope>NUCLEOTIDE SEQUENCE [LARGE SCALE MRNA] (ISOFORM A)</scope>
</reference>
<reference key="3">
    <citation type="submission" date="2005-04" db="EMBL/GenBank/DDBJ databases">
        <authorList>
            <person name="Suzuki Y."/>
            <person name="Sugano S."/>
            <person name="Totoki Y."/>
            <person name="Toyoda A."/>
            <person name="Takeda T."/>
            <person name="Sakaki Y."/>
            <person name="Tanaka A."/>
            <person name="Yokoyama S."/>
        </authorList>
    </citation>
    <scope>NUCLEOTIDE SEQUENCE [LARGE SCALE MRNA] (ISOFORM A')</scope>
    <source>
        <tissue>Dermoid cancer</tissue>
    </source>
</reference>
<reference key="4">
    <citation type="journal article" date="2006" name="Nature">
        <title>The DNA sequence and biological annotation of human chromosome 1.</title>
        <authorList>
            <person name="Gregory S.G."/>
            <person name="Barlow K.F."/>
            <person name="McLay K.E."/>
            <person name="Kaul R."/>
            <person name="Swarbreck D."/>
            <person name="Dunham A."/>
            <person name="Scott C.E."/>
            <person name="Howe K.L."/>
            <person name="Woodfine K."/>
            <person name="Spencer C.C.A."/>
            <person name="Jones M.C."/>
            <person name="Gillson C."/>
            <person name="Searle S."/>
            <person name="Zhou Y."/>
            <person name="Kokocinski F."/>
            <person name="McDonald L."/>
            <person name="Evans R."/>
            <person name="Phillips K."/>
            <person name="Atkinson A."/>
            <person name="Cooper R."/>
            <person name="Jones C."/>
            <person name="Hall R.E."/>
            <person name="Andrews T.D."/>
            <person name="Lloyd C."/>
            <person name="Ainscough R."/>
            <person name="Almeida J.P."/>
            <person name="Ambrose K.D."/>
            <person name="Anderson F."/>
            <person name="Andrew R.W."/>
            <person name="Ashwell R.I.S."/>
            <person name="Aubin K."/>
            <person name="Babbage A.K."/>
            <person name="Bagguley C.L."/>
            <person name="Bailey J."/>
            <person name="Beasley H."/>
            <person name="Bethel G."/>
            <person name="Bird C.P."/>
            <person name="Bray-Allen S."/>
            <person name="Brown J.Y."/>
            <person name="Brown A.J."/>
            <person name="Buckley D."/>
            <person name="Burton J."/>
            <person name="Bye J."/>
            <person name="Carder C."/>
            <person name="Chapman J.C."/>
            <person name="Clark S.Y."/>
            <person name="Clarke G."/>
            <person name="Clee C."/>
            <person name="Cobley V."/>
            <person name="Collier R.E."/>
            <person name="Corby N."/>
            <person name="Coville G.J."/>
            <person name="Davies J."/>
            <person name="Deadman R."/>
            <person name="Dunn M."/>
            <person name="Earthrowl M."/>
            <person name="Ellington A.G."/>
            <person name="Errington H."/>
            <person name="Frankish A."/>
            <person name="Frankland J."/>
            <person name="French L."/>
            <person name="Garner P."/>
            <person name="Garnett J."/>
            <person name="Gay L."/>
            <person name="Ghori M.R.J."/>
            <person name="Gibson R."/>
            <person name="Gilby L.M."/>
            <person name="Gillett W."/>
            <person name="Glithero R.J."/>
            <person name="Grafham D.V."/>
            <person name="Griffiths C."/>
            <person name="Griffiths-Jones S."/>
            <person name="Grocock R."/>
            <person name="Hammond S."/>
            <person name="Harrison E.S.I."/>
            <person name="Hart E."/>
            <person name="Haugen E."/>
            <person name="Heath P.D."/>
            <person name="Holmes S."/>
            <person name="Holt K."/>
            <person name="Howden P.J."/>
            <person name="Hunt A.R."/>
            <person name="Hunt S.E."/>
            <person name="Hunter G."/>
            <person name="Isherwood J."/>
            <person name="James R."/>
            <person name="Johnson C."/>
            <person name="Johnson D."/>
            <person name="Joy A."/>
            <person name="Kay M."/>
            <person name="Kershaw J.K."/>
            <person name="Kibukawa M."/>
            <person name="Kimberley A.M."/>
            <person name="King A."/>
            <person name="Knights A.J."/>
            <person name="Lad H."/>
            <person name="Laird G."/>
            <person name="Lawlor S."/>
            <person name="Leongamornlert D.A."/>
            <person name="Lloyd D.M."/>
            <person name="Loveland J."/>
            <person name="Lovell J."/>
            <person name="Lush M.J."/>
            <person name="Lyne R."/>
            <person name="Martin S."/>
            <person name="Mashreghi-Mohammadi M."/>
            <person name="Matthews L."/>
            <person name="Matthews N.S.W."/>
            <person name="McLaren S."/>
            <person name="Milne S."/>
            <person name="Mistry S."/>
            <person name="Moore M.J.F."/>
            <person name="Nickerson T."/>
            <person name="O'Dell C.N."/>
            <person name="Oliver K."/>
            <person name="Palmeiri A."/>
            <person name="Palmer S.A."/>
            <person name="Parker A."/>
            <person name="Patel D."/>
            <person name="Pearce A.V."/>
            <person name="Peck A.I."/>
            <person name="Pelan S."/>
            <person name="Phelps K."/>
            <person name="Phillimore B.J."/>
            <person name="Plumb R."/>
            <person name="Rajan J."/>
            <person name="Raymond C."/>
            <person name="Rouse G."/>
            <person name="Saenphimmachak C."/>
            <person name="Sehra H.K."/>
            <person name="Sheridan E."/>
            <person name="Shownkeen R."/>
            <person name="Sims S."/>
            <person name="Skuce C.D."/>
            <person name="Smith M."/>
            <person name="Steward C."/>
            <person name="Subramanian S."/>
            <person name="Sycamore N."/>
            <person name="Tracey A."/>
            <person name="Tromans A."/>
            <person name="Van Helmond Z."/>
            <person name="Wall M."/>
            <person name="Wallis J.M."/>
            <person name="White S."/>
            <person name="Whitehead S.L."/>
            <person name="Wilkinson J.E."/>
            <person name="Willey D.L."/>
            <person name="Williams H."/>
            <person name="Wilming L."/>
            <person name="Wray P.W."/>
            <person name="Wu Z."/>
            <person name="Coulson A."/>
            <person name="Vaudin M."/>
            <person name="Sulston J.E."/>
            <person name="Durbin R.M."/>
            <person name="Hubbard T."/>
            <person name="Wooster R."/>
            <person name="Dunham I."/>
            <person name="Carter N.P."/>
            <person name="McVean G."/>
            <person name="Ross M.T."/>
            <person name="Harrow J."/>
            <person name="Olson M.V."/>
            <person name="Beck S."/>
            <person name="Rogers J."/>
            <person name="Bentley D.R."/>
        </authorList>
    </citation>
    <scope>NUCLEOTIDE SEQUENCE [LARGE SCALE GENOMIC DNA]</scope>
</reference>
<reference key="5">
    <citation type="submission" date="2005-07" db="EMBL/GenBank/DDBJ databases">
        <authorList>
            <person name="Mural R.J."/>
            <person name="Istrail S."/>
            <person name="Sutton G.G."/>
            <person name="Florea L."/>
            <person name="Halpern A.L."/>
            <person name="Mobarry C.M."/>
            <person name="Lippert R."/>
            <person name="Walenz B."/>
            <person name="Shatkay H."/>
            <person name="Dew I."/>
            <person name="Miller J.R."/>
            <person name="Flanigan M.J."/>
            <person name="Edwards N.J."/>
            <person name="Bolanos R."/>
            <person name="Fasulo D."/>
            <person name="Halldorsson B.V."/>
            <person name="Hannenhalli S."/>
            <person name="Turner R."/>
            <person name="Yooseph S."/>
            <person name="Lu F."/>
            <person name="Nusskern D.R."/>
            <person name="Shue B.C."/>
            <person name="Zheng X.H."/>
            <person name="Zhong F."/>
            <person name="Delcher A.L."/>
            <person name="Huson D.H."/>
            <person name="Kravitz S.A."/>
            <person name="Mouchard L."/>
            <person name="Reinert K."/>
            <person name="Remington K.A."/>
            <person name="Clark A.G."/>
            <person name="Waterman M.S."/>
            <person name="Eichler E.E."/>
            <person name="Adams M.D."/>
            <person name="Hunkapiller M.W."/>
            <person name="Myers E.W."/>
            <person name="Venter J.C."/>
        </authorList>
    </citation>
    <scope>NUCLEOTIDE SEQUENCE [LARGE SCALE GENOMIC DNA]</scope>
</reference>
<reference key="6">
    <citation type="journal article" date="2004" name="Genome Res.">
        <title>The status, quality, and expansion of the NIH full-length cDNA project: the Mammalian Gene Collection (MGC).</title>
        <authorList>
            <consortium name="The MGC Project Team"/>
        </authorList>
    </citation>
    <scope>NUCLEOTIDE SEQUENCE [LARGE SCALE MRNA] (ISOFORM A)</scope>
    <source>
        <tissue>Uterus</tissue>
    </source>
</reference>
<reference key="7">
    <citation type="submission" date="2000-03" db="EMBL/GenBank/DDBJ databases">
        <title>The WashU-Merck EST project.</title>
        <authorList>
            <person name="Hillier L."/>
            <person name="Clark N."/>
            <person name="Dubuque T."/>
            <person name="Elliston K."/>
            <person name="Hawkins M."/>
            <person name="Holman M."/>
            <person name="Hultman M."/>
            <person name="Kucaba T."/>
            <person name="Le M."/>
            <person name="Lennon G."/>
            <person name="Marra M."/>
            <person name="Parsons J."/>
            <person name="Rifkin L."/>
            <person name="Rohlfing T."/>
            <person name="Soares M."/>
            <person name="Tan F."/>
            <person name="Trevaskis E."/>
            <person name="Waterston R."/>
            <person name="Williamson A."/>
            <person name="Wohldmann P."/>
            <person name="Wilson R."/>
        </authorList>
    </citation>
    <scope>NUCLEOTIDE SEQUENCE [LARGE SCALE MRNA] OF 1-99 (ISOFORM B)</scope>
</reference>
<reference key="8">
    <citation type="journal article" date="2000" name="Matrix Biol.">
        <title>Revised genomic structure of the human MAGP1 gene and identification of alternate transcripts in human and mouse tissues.</title>
        <authorList>
            <person name="Segade F."/>
            <person name="Broekelmann T.J."/>
            <person name="Pierce R.A."/>
            <person name="Mecham R.P."/>
        </authorList>
    </citation>
    <scope>ALTERNATIVE SPLICING</scope>
</reference>
<gene>
    <name type="primary">MFAP2</name>
    <name type="synonym">MAGP1</name>
</gene>
<comment type="function">
    <text>Component of the elastin-associated microfibrils.</text>
</comment>
<comment type="subunit">
    <text evidence="1">Forms a ternary complex with BGN and ELN. Interacts with FBN1 (via N-terminal domain) and FBN2.</text>
</comment>
<comment type="interaction">
    <interactant intactId="EBI-2462387">
        <id>P55001</id>
    </interactant>
    <interactant intactId="EBI-740785">
        <id>P49639</id>
        <label>HOXA1</label>
    </interactant>
    <organismsDiffer>false</organismsDiffer>
    <experiments>3</experiments>
</comment>
<comment type="subcellular location">
    <subcellularLocation>
        <location>Secreted</location>
        <location>Extracellular space</location>
        <location>Extracellular matrix</location>
    </subcellularLocation>
</comment>
<comment type="alternative products">
    <event type="alternative splicing"/>
    <isoform>
        <id>P55001-1</id>
        <name>A</name>
        <sequence type="displayed"/>
    </isoform>
    <isoform>
        <id>P55001-2</id>
        <name>A'</name>
        <sequence type="described" ref="VSP_042780"/>
    </isoform>
    <isoform>
        <id>P55001-3</id>
        <name>B</name>
        <sequence type="described" ref="VSP_042779"/>
    </isoform>
</comment>
<comment type="PTM">
    <text>Forms intermolecular disulfide bonds either with other MAGP-1 molecules or with other components of the microfibrils. May form transglutaminase cross-links.</text>
</comment>
<comment type="PTM">
    <text>O-glycosylated.</text>
</comment>
<comment type="similarity">
    <text evidence="7">Belongs to the MFAP family.</text>
</comment>
<accession>P55001</accession>
<accession>Q53X60</accession>
<accession>Q5JXY0</accession>
<keyword id="KW-0025">Alternative splicing</keyword>
<keyword id="KW-1015">Disulfide bond</keyword>
<keyword id="KW-0272">Extracellular matrix</keyword>
<keyword id="KW-0325">Glycoprotein</keyword>
<keyword id="KW-1267">Proteomics identification</keyword>
<keyword id="KW-0873">Pyrrolidone carboxylic acid</keyword>
<keyword id="KW-1185">Reference proteome</keyword>
<keyword id="KW-0964">Secreted</keyword>
<keyword id="KW-0732">Signal</keyword>
<keyword id="KW-0765">Sulfation</keyword>
<proteinExistence type="evidence at protein level"/>